<feature type="chain" id="PRO_0000272875" description="Large ribosomal subunit protein uL23">
    <location>
        <begin position="1"/>
        <end position="99"/>
    </location>
</feature>
<gene>
    <name evidence="1" type="primary">rplW</name>
    <name type="ordered locus">XCC0897</name>
</gene>
<accession>Q8PC47</accession>
<organism>
    <name type="scientific">Xanthomonas campestris pv. campestris (strain ATCC 33913 / DSM 3586 / NCPPB 528 / LMG 568 / P 25)</name>
    <dbReference type="NCBI Taxonomy" id="190485"/>
    <lineage>
        <taxon>Bacteria</taxon>
        <taxon>Pseudomonadati</taxon>
        <taxon>Pseudomonadota</taxon>
        <taxon>Gammaproteobacteria</taxon>
        <taxon>Lysobacterales</taxon>
        <taxon>Lysobacteraceae</taxon>
        <taxon>Xanthomonas</taxon>
    </lineage>
</organism>
<comment type="function">
    <text evidence="1">One of the early assembly proteins it binds 23S rRNA. One of the proteins that surrounds the polypeptide exit tunnel on the outside of the ribosome. Forms the main docking site for trigger factor binding to the ribosome.</text>
</comment>
<comment type="subunit">
    <text evidence="1">Part of the 50S ribosomal subunit. Contacts protein L29, and trigger factor when it is bound to the ribosome.</text>
</comment>
<comment type="similarity">
    <text evidence="1">Belongs to the universal ribosomal protein uL23 family.</text>
</comment>
<name>RL23_XANCP</name>
<protein>
    <recommendedName>
        <fullName evidence="1">Large ribosomal subunit protein uL23</fullName>
    </recommendedName>
    <alternativeName>
        <fullName evidence="2">50S ribosomal protein L23</fullName>
    </alternativeName>
</protein>
<sequence>MSSNEKIFSVLRAPRVSEKTARLQEISNQYVFEVSNEATKADVKAAVEQLFDVKVKAVNVVNVKGKSKSFRNRAGSRGNWRKAYVRLVDGQSIDVTAKA</sequence>
<reference key="1">
    <citation type="journal article" date="2002" name="Nature">
        <title>Comparison of the genomes of two Xanthomonas pathogens with differing host specificities.</title>
        <authorList>
            <person name="da Silva A.C.R."/>
            <person name="Ferro J.A."/>
            <person name="Reinach F.C."/>
            <person name="Farah C.S."/>
            <person name="Furlan L.R."/>
            <person name="Quaggio R.B."/>
            <person name="Monteiro-Vitorello C.B."/>
            <person name="Van Sluys M.A."/>
            <person name="Almeida N.F. Jr."/>
            <person name="Alves L.M.C."/>
            <person name="do Amaral A.M."/>
            <person name="Bertolini M.C."/>
            <person name="Camargo L.E.A."/>
            <person name="Camarotte G."/>
            <person name="Cannavan F."/>
            <person name="Cardozo J."/>
            <person name="Chambergo F."/>
            <person name="Ciapina L.P."/>
            <person name="Cicarelli R.M.B."/>
            <person name="Coutinho L.L."/>
            <person name="Cursino-Santos J.R."/>
            <person name="El-Dorry H."/>
            <person name="Faria J.B."/>
            <person name="Ferreira A.J.S."/>
            <person name="Ferreira R.C.C."/>
            <person name="Ferro M.I.T."/>
            <person name="Formighieri E.F."/>
            <person name="Franco M.C."/>
            <person name="Greggio C.C."/>
            <person name="Gruber A."/>
            <person name="Katsuyama A.M."/>
            <person name="Kishi L.T."/>
            <person name="Leite R.P."/>
            <person name="Lemos E.G.M."/>
            <person name="Lemos M.V.F."/>
            <person name="Locali E.C."/>
            <person name="Machado M.A."/>
            <person name="Madeira A.M.B.N."/>
            <person name="Martinez-Rossi N.M."/>
            <person name="Martins E.C."/>
            <person name="Meidanis J."/>
            <person name="Menck C.F.M."/>
            <person name="Miyaki C.Y."/>
            <person name="Moon D.H."/>
            <person name="Moreira L.M."/>
            <person name="Novo M.T.M."/>
            <person name="Okura V.K."/>
            <person name="Oliveira M.C."/>
            <person name="Oliveira V.R."/>
            <person name="Pereira H.A."/>
            <person name="Rossi A."/>
            <person name="Sena J.A.D."/>
            <person name="Silva C."/>
            <person name="de Souza R.F."/>
            <person name="Spinola L.A.F."/>
            <person name="Takita M.A."/>
            <person name="Tamura R.E."/>
            <person name="Teixeira E.C."/>
            <person name="Tezza R.I.D."/>
            <person name="Trindade dos Santos M."/>
            <person name="Truffi D."/>
            <person name="Tsai S.M."/>
            <person name="White F.F."/>
            <person name="Setubal J.C."/>
            <person name="Kitajima J.P."/>
        </authorList>
    </citation>
    <scope>NUCLEOTIDE SEQUENCE [LARGE SCALE GENOMIC DNA]</scope>
    <source>
        <strain>ATCC 33913 / DSM 3586 / NCPPB 528 / LMG 568 / P 25</strain>
    </source>
</reference>
<dbReference type="EMBL" id="AE008922">
    <property type="protein sequence ID" value="AAM40207.1"/>
    <property type="molecule type" value="Genomic_DNA"/>
</dbReference>
<dbReference type="RefSeq" id="NP_636283.1">
    <property type="nucleotide sequence ID" value="NC_003902.1"/>
</dbReference>
<dbReference type="RefSeq" id="WP_002811694.1">
    <property type="nucleotide sequence ID" value="NC_003902.1"/>
</dbReference>
<dbReference type="SMR" id="Q8PC47"/>
<dbReference type="STRING" id="190485.XCC0897"/>
<dbReference type="EnsemblBacteria" id="AAM40207">
    <property type="protein sequence ID" value="AAM40207"/>
    <property type="gene ID" value="XCC0897"/>
</dbReference>
<dbReference type="GeneID" id="97210506"/>
<dbReference type="KEGG" id="xcc:XCC0897"/>
<dbReference type="PATRIC" id="fig|190485.4.peg.969"/>
<dbReference type="eggNOG" id="COG0089">
    <property type="taxonomic scope" value="Bacteria"/>
</dbReference>
<dbReference type="HOGENOM" id="CLU_037562_3_1_6"/>
<dbReference type="OrthoDB" id="9793353at2"/>
<dbReference type="Proteomes" id="UP000001010">
    <property type="component" value="Chromosome"/>
</dbReference>
<dbReference type="GO" id="GO:0022625">
    <property type="term" value="C:cytosolic large ribosomal subunit"/>
    <property type="evidence" value="ECO:0000318"/>
    <property type="project" value="GO_Central"/>
</dbReference>
<dbReference type="GO" id="GO:0019843">
    <property type="term" value="F:rRNA binding"/>
    <property type="evidence" value="ECO:0007669"/>
    <property type="project" value="UniProtKB-UniRule"/>
</dbReference>
<dbReference type="GO" id="GO:0003735">
    <property type="term" value="F:structural constituent of ribosome"/>
    <property type="evidence" value="ECO:0000318"/>
    <property type="project" value="GO_Central"/>
</dbReference>
<dbReference type="GO" id="GO:0006412">
    <property type="term" value="P:translation"/>
    <property type="evidence" value="ECO:0007669"/>
    <property type="project" value="UniProtKB-UniRule"/>
</dbReference>
<dbReference type="FunFam" id="3.30.70.330:FF:000001">
    <property type="entry name" value="50S ribosomal protein L23"/>
    <property type="match status" value="1"/>
</dbReference>
<dbReference type="Gene3D" id="3.30.70.330">
    <property type="match status" value="1"/>
</dbReference>
<dbReference type="HAMAP" id="MF_01369_B">
    <property type="entry name" value="Ribosomal_uL23_B"/>
    <property type="match status" value="1"/>
</dbReference>
<dbReference type="InterPro" id="IPR012677">
    <property type="entry name" value="Nucleotide-bd_a/b_plait_sf"/>
</dbReference>
<dbReference type="InterPro" id="IPR013025">
    <property type="entry name" value="Ribosomal_uL23-like"/>
</dbReference>
<dbReference type="InterPro" id="IPR012678">
    <property type="entry name" value="Ribosomal_uL23/eL15/eS24_sf"/>
</dbReference>
<dbReference type="NCBIfam" id="NF004359">
    <property type="entry name" value="PRK05738.1-3"/>
    <property type="match status" value="1"/>
</dbReference>
<dbReference type="NCBIfam" id="NF004363">
    <property type="entry name" value="PRK05738.2-4"/>
    <property type="match status" value="1"/>
</dbReference>
<dbReference type="PANTHER" id="PTHR11620">
    <property type="entry name" value="60S RIBOSOMAL PROTEIN L23A"/>
    <property type="match status" value="1"/>
</dbReference>
<dbReference type="Pfam" id="PF00276">
    <property type="entry name" value="Ribosomal_L23"/>
    <property type="match status" value="1"/>
</dbReference>
<dbReference type="SUPFAM" id="SSF54189">
    <property type="entry name" value="Ribosomal proteins S24e, L23 and L15e"/>
    <property type="match status" value="1"/>
</dbReference>
<keyword id="KW-1185">Reference proteome</keyword>
<keyword id="KW-0687">Ribonucleoprotein</keyword>
<keyword id="KW-0689">Ribosomal protein</keyword>
<keyword id="KW-0694">RNA-binding</keyword>
<keyword id="KW-0699">rRNA-binding</keyword>
<proteinExistence type="inferred from homology"/>
<evidence type="ECO:0000255" key="1">
    <source>
        <dbReference type="HAMAP-Rule" id="MF_01369"/>
    </source>
</evidence>
<evidence type="ECO:0000305" key="2"/>